<sequence>MSTPDNRSVNFFSLFRRGQHYSKTWPLEKRLAPVFVENRVIKMTRYAIRFMPPIAVFTLCWQIALGGQLGPAVATALFALSLPMQGLWWLGKRSVTPLPPAILNWFYEVRGKLQESGQVLAPVEGKPDYQALADTLKRAFKQLDKTFLDDL</sequence>
<reference key="1">
    <citation type="journal article" date="2008" name="J. Bacteriol.">
        <title>Insights into the environmental resistance gene pool from the genome sequence of the multidrug-resistant environmental isolate Escherichia coli SMS-3-5.</title>
        <authorList>
            <person name="Fricke W.F."/>
            <person name="Wright M.S."/>
            <person name="Lindell A.H."/>
            <person name="Harkins D.M."/>
            <person name="Baker-Austin C."/>
            <person name="Ravel J."/>
            <person name="Stepanauskas R."/>
        </authorList>
    </citation>
    <scope>NUCLEOTIDE SEQUENCE [LARGE SCALE GENOMIC DNA]</scope>
    <source>
        <strain>SMS-3-5 / SECEC</strain>
    </source>
</reference>
<proteinExistence type="inferred from homology"/>
<comment type="subcellular location">
    <subcellularLocation>
        <location evidence="1">Cell inner membrane</location>
        <topology evidence="1">Multi-pass membrane protein</topology>
    </subcellularLocation>
</comment>
<comment type="similarity">
    <text evidence="1">Belongs to the UPF0208 family.</text>
</comment>
<protein>
    <recommendedName>
        <fullName evidence="1">UPF0208 membrane protein YfbV</fullName>
    </recommendedName>
</protein>
<name>YFBV_ECOSM</name>
<evidence type="ECO:0000255" key="1">
    <source>
        <dbReference type="HAMAP-Rule" id="MF_01101"/>
    </source>
</evidence>
<accession>B1LLP9</accession>
<dbReference type="EMBL" id="CP000970">
    <property type="protein sequence ID" value="ACB16182.1"/>
    <property type="molecule type" value="Genomic_DNA"/>
</dbReference>
<dbReference type="RefSeq" id="WP_000106627.1">
    <property type="nucleotide sequence ID" value="NC_010498.1"/>
</dbReference>
<dbReference type="GeneID" id="93774879"/>
<dbReference type="KEGG" id="ecm:EcSMS35_2450"/>
<dbReference type="HOGENOM" id="CLU_128746_0_0_6"/>
<dbReference type="Proteomes" id="UP000007011">
    <property type="component" value="Chromosome"/>
</dbReference>
<dbReference type="GO" id="GO:0005886">
    <property type="term" value="C:plasma membrane"/>
    <property type="evidence" value="ECO:0007669"/>
    <property type="project" value="UniProtKB-SubCell"/>
</dbReference>
<dbReference type="HAMAP" id="MF_01101">
    <property type="entry name" value="UPF0208"/>
    <property type="match status" value="1"/>
</dbReference>
<dbReference type="InterPro" id="IPR007334">
    <property type="entry name" value="UPF0208"/>
</dbReference>
<dbReference type="NCBIfam" id="NF002493">
    <property type="entry name" value="PRK01816.1"/>
    <property type="match status" value="1"/>
</dbReference>
<dbReference type="Pfam" id="PF04217">
    <property type="entry name" value="DUF412"/>
    <property type="match status" value="1"/>
</dbReference>
<gene>
    <name evidence="1" type="primary">yfbV</name>
    <name type="ordered locus">EcSMS35_2450</name>
</gene>
<feature type="chain" id="PRO_1000136991" description="UPF0208 membrane protein YfbV">
    <location>
        <begin position="1"/>
        <end position="151"/>
    </location>
</feature>
<feature type="transmembrane region" description="Helical" evidence="1">
    <location>
        <begin position="46"/>
        <end position="65"/>
    </location>
</feature>
<feature type="transmembrane region" description="Helical" evidence="1">
    <location>
        <begin position="69"/>
        <end position="91"/>
    </location>
</feature>
<organism>
    <name type="scientific">Escherichia coli (strain SMS-3-5 / SECEC)</name>
    <dbReference type="NCBI Taxonomy" id="439855"/>
    <lineage>
        <taxon>Bacteria</taxon>
        <taxon>Pseudomonadati</taxon>
        <taxon>Pseudomonadota</taxon>
        <taxon>Gammaproteobacteria</taxon>
        <taxon>Enterobacterales</taxon>
        <taxon>Enterobacteriaceae</taxon>
        <taxon>Escherichia</taxon>
    </lineage>
</organism>
<keyword id="KW-0997">Cell inner membrane</keyword>
<keyword id="KW-1003">Cell membrane</keyword>
<keyword id="KW-0472">Membrane</keyword>
<keyword id="KW-0812">Transmembrane</keyword>
<keyword id="KW-1133">Transmembrane helix</keyword>